<keyword id="KW-0217">Developmental protein</keyword>
<keyword id="KW-0238">DNA-binding</keyword>
<keyword id="KW-0539">Nucleus</keyword>
<keyword id="KW-0563">Paired box</keyword>
<keyword id="KW-0804">Transcription</keyword>
<keyword id="KW-0805">Transcription regulation</keyword>
<accession>Q2VL51</accession>
<gene>
    <name type="primary">PAX9</name>
</gene>
<evidence type="ECO:0000250" key="1"/>
<evidence type="ECO:0000255" key="2">
    <source>
        <dbReference type="PROSITE-ProRule" id="PRU00381"/>
    </source>
</evidence>
<proteinExistence type="inferred from homology"/>
<protein>
    <recommendedName>
        <fullName>Paired box protein Pax-9</fullName>
    </recommendedName>
</protein>
<dbReference type="EMBL" id="DQ067540">
    <property type="protein sequence ID" value="AAZ39865.1"/>
    <property type="molecule type" value="Genomic_DNA"/>
</dbReference>
<dbReference type="EMBL" id="DQ067538">
    <property type="protein sequence ID" value="AAZ39865.1"/>
    <property type="status" value="JOINED"/>
    <property type="molecule type" value="Genomic_DNA"/>
</dbReference>
<dbReference type="EMBL" id="DQ067539">
    <property type="protein sequence ID" value="AAZ39865.1"/>
    <property type="status" value="JOINED"/>
    <property type="molecule type" value="Genomic_DNA"/>
</dbReference>
<dbReference type="SMR" id="Q2VL51"/>
<dbReference type="GO" id="GO:0005634">
    <property type="term" value="C:nucleus"/>
    <property type="evidence" value="ECO:0007669"/>
    <property type="project" value="UniProtKB-SubCell"/>
</dbReference>
<dbReference type="GO" id="GO:0000981">
    <property type="term" value="F:DNA-binding transcription factor activity, RNA polymerase II-specific"/>
    <property type="evidence" value="ECO:0007669"/>
    <property type="project" value="TreeGrafter"/>
</dbReference>
<dbReference type="GO" id="GO:0000978">
    <property type="term" value="F:RNA polymerase II cis-regulatory region sequence-specific DNA binding"/>
    <property type="evidence" value="ECO:0007669"/>
    <property type="project" value="TreeGrafter"/>
</dbReference>
<dbReference type="CDD" id="cd00131">
    <property type="entry name" value="PAX"/>
    <property type="match status" value="1"/>
</dbReference>
<dbReference type="FunFam" id="1.10.10.10:FF:000003">
    <property type="entry name" value="Paired box protein Pax-6"/>
    <property type="match status" value="1"/>
</dbReference>
<dbReference type="FunFam" id="1.10.10.10:FF:000084">
    <property type="entry name" value="paired box protein Pax-9"/>
    <property type="match status" value="1"/>
</dbReference>
<dbReference type="Gene3D" id="1.10.10.10">
    <property type="entry name" value="Winged helix-like DNA-binding domain superfamily/Winged helix DNA-binding domain"/>
    <property type="match status" value="2"/>
</dbReference>
<dbReference type="InterPro" id="IPR009057">
    <property type="entry name" value="Homeodomain-like_sf"/>
</dbReference>
<dbReference type="InterPro" id="IPR043182">
    <property type="entry name" value="PAIRED_DNA-bd_dom"/>
</dbReference>
<dbReference type="InterPro" id="IPR001523">
    <property type="entry name" value="Paired_dom"/>
</dbReference>
<dbReference type="InterPro" id="IPR043565">
    <property type="entry name" value="PAX_fam"/>
</dbReference>
<dbReference type="InterPro" id="IPR036388">
    <property type="entry name" value="WH-like_DNA-bd_sf"/>
</dbReference>
<dbReference type="PANTHER" id="PTHR45636">
    <property type="entry name" value="PAIRED BOX PROTEIN PAX-6-RELATED-RELATED"/>
    <property type="match status" value="1"/>
</dbReference>
<dbReference type="PANTHER" id="PTHR45636:SF13">
    <property type="entry name" value="PAIRED BOX PROTEIN PAX-9"/>
    <property type="match status" value="1"/>
</dbReference>
<dbReference type="Pfam" id="PF00292">
    <property type="entry name" value="PAX"/>
    <property type="match status" value="1"/>
</dbReference>
<dbReference type="PRINTS" id="PR00027">
    <property type="entry name" value="PAIREDBOX"/>
</dbReference>
<dbReference type="SMART" id="SM00351">
    <property type="entry name" value="PAX"/>
    <property type="match status" value="1"/>
</dbReference>
<dbReference type="SUPFAM" id="SSF46689">
    <property type="entry name" value="Homeodomain-like"/>
    <property type="match status" value="1"/>
</dbReference>
<dbReference type="PROSITE" id="PS00034">
    <property type="entry name" value="PAIRED_1"/>
    <property type="match status" value="1"/>
</dbReference>
<dbReference type="PROSITE" id="PS51057">
    <property type="entry name" value="PAIRED_2"/>
    <property type="match status" value="1"/>
</dbReference>
<sequence length="341" mass="36320">MEPAFGEVNQLGGVFVNGRPLPNAIRLRIVELAQLGIRPCDISRQLRVSHGCVSKILARYNETGSILPGAIGGSKPRVTTPTVVKHIRTYKQRDPGIFAWEIRDRLLADGVCDKYNVPSVSSISRILRNKIGNLAQQGHYDSYKQHQPAPQPALPYNHIYSYPSPITAAAAKVPTPPGVPAIPGSVAMPRTWPSSHSVTDILGIRSITDQVSDSSPYHSPKVEEWSSLGRNNFPAAAPHAVNGLEKGALEQEAKYGQAPNGLPAVSSFVSASSMAPYPTPAQVSPYMTYSAAPSGYVAGHGWQHAGGTPLSPHNCDIPASLAFKGMQAAREGSHSVTASAL</sequence>
<name>PAX9_LEPED</name>
<comment type="function">
    <text evidence="1">Transcription factor required for normal development of thymus, parathyroid glands, ultimobranchial bodies, teeth, skeletal elements of skull and larynx as well as distal limbs.</text>
</comment>
<comment type="subunit">
    <text evidence="1">Interacts with KDM5B.</text>
</comment>
<comment type="subcellular location">
    <subcellularLocation>
        <location>Nucleus</location>
    </subcellularLocation>
</comment>
<organism>
    <name type="scientific">Lepilemur edwardsi</name>
    <name type="common">Milne-Edwards's sportive lemur</name>
    <dbReference type="NCBI Taxonomy" id="122230"/>
    <lineage>
        <taxon>Eukaryota</taxon>
        <taxon>Metazoa</taxon>
        <taxon>Chordata</taxon>
        <taxon>Craniata</taxon>
        <taxon>Vertebrata</taxon>
        <taxon>Euteleostomi</taxon>
        <taxon>Mammalia</taxon>
        <taxon>Eutheria</taxon>
        <taxon>Euarchontoglires</taxon>
        <taxon>Primates</taxon>
        <taxon>Strepsirrhini</taxon>
        <taxon>Lemuriformes</taxon>
        <taxon>Lepilemuridae</taxon>
        <taxon>Lepilemur</taxon>
    </lineage>
</organism>
<reference key="1">
    <citation type="journal article" date="2006" name="Mol. Biol. Evol.">
        <title>Molecular evolution of the primate developmental genes MSX1 and PAX9.</title>
        <authorList>
            <person name="Perry G.H."/>
            <person name="Verrelli B.C."/>
            <person name="Stone A.C."/>
        </authorList>
    </citation>
    <scope>NUCLEOTIDE SEQUENCE [GENOMIC DNA]</scope>
    <source>
        <strain>Isolate JP207</strain>
    </source>
</reference>
<feature type="chain" id="PRO_0000050206" description="Paired box protein Pax-9">
    <location>
        <begin position="1"/>
        <end position="341"/>
    </location>
</feature>
<feature type="DNA-binding region" description="Paired" evidence="2">
    <location>
        <begin position="4"/>
        <end position="130"/>
    </location>
</feature>
<feature type="region of interest" description="PAI subdomain" evidence="2">
    <location>
        <begin position="7"/>
        <end position="63"/>
    </location>
</feature>
<feature type="region of interest" description="RED subdomain" evidence="2">
    <location>
        <begin position="82"/>
        <end position="130"/>
    </location>
</feature>
<feature type="region of interest" description="Interaction with KDM5B" evidence="1">
    <location>
        <begin position="168"/>
        <end position="189"/>
    </location>
</feature>